<sequence>MLKLIVKNGYVIDPSQNLEGEFDILVENGKIKKIDKNILVPEAEIIDAKGLIVCPGFIDIHVHLRDPGQTYKEDIESGSRCAVAGGFTTIVCMPNTNPPIDNTTVVNYILQKSKSVGLCRVLPTGTITKGRKGKEIADFYSLKEAGCVAFTDDGSPVMDSSVMRKALELASQLGVPIMDHCEDDKLAYGVINEGEVSALLGLSSRAPEAEEIQIARDGILAQRTGGHVHIQHVSTKLSLEIIEFFKEKGVKITCEVNPNHLLFTEREVLNSGANARVNPPLRKKEDRLALIEGVKRGIIDCFATDHAPHQTFEKELVEFAMPGIIGLQTALPSALELYRKGIISLKKLIEMFTINPARIIGVDLGTLKLGSPADITIFDPNKEWILNEETNLSKSRNTPLWGKVLKGKVIYTIKDGKMVYKD</sequence>
<protein>
    <recommendedName>
        <fullName evidence="1">Dihydroorotase</fullName>
        <shortName evidence="1">DHOase</shortName>
        <ecNumber evidence="1 2 5">3.5.2.3</ecNumber>
    </recommendedName>
</protein>
<gene>
    <name evidence="1" type="primary">pyrC</name>
    <name type="ordered locus">aq_806</name>
</gene>
<evidence type="ECO:0000255" key="1">
    <source>
        <dbReference type="HAMAP-Rule" id="MF_00220"/>
    </source>
</evidence>
<evidence type="ECO:0000269" key="2">
    <source>
    </source>
</evidence>
<evidence type="ECO:0000269" key="3">
    <source>
    </source>
</evidence>
<evidence type="ECO:0000269" key="4">
    <source>
    </source>
</evidence>
<evidence type="ECO:0000269" key="5">
    <source>
    </source>
</evidence>
<evidence type="ECO:0000305" key="6"/>
<evidence type="ECO:0000305" key="7">
    <source>
    </source>
</evidence>
<evidence type="ECO:0007744" key="8">
    <source>
        <dbReference type="PDB" id="1XRF"/>
    </source>
</evidence>
<evidence type="ECO:0007744" key="9">
    <source>
        <dbReference type="PDB" id="1XRT"/>
    </source>
</evidence>
<evidence type="ECO:0007744" key="10">
    <source>
        <dbReference type="PDB" id="3D6N"/>
    </source>
</evidence>
<evidence type="ECO:0007744" key="11">
    <source>
        <dbReference type="PDB" id="4BJH"/>
    </source>
</evidence>
<evidence type="ECO:0007829" key="12">
    <source>
        <dbReference type="PDB" id="1XRT"/>
    </source>
</evidence>
<evidence type="ECO:0007829" key="13">
    <source>
        <dbReference type="PDB" id="4BJH"/>
    </source>
</evidence>
<feature type="chain" id="PRO_0000147226" description="Dihydroorotase">
    <location>
        <begin position="1"/>
        <end position="422"/>
    </location>
</feature>
<feature type="active site" evidence="1">
    <location>
        <position position="305"/>
    </location>
</feature>
<feature type="binding site" evidence="3 4 5 8 9 10 11">
    <location>
        <position position="61"/>
    </location>
    <ligand>
        <name>Zn(2+)</name>
        <dbReference type="ChEBI" id="CHEBI:29105"/>
    </ligand>
</feature>
<feature type="binding site" evidence="1 7 11">
    <location>
        <begin position="63"/>
        <end position="65"/>
    </location>
    <ligand>
        <name>substrate</name>
    </ligand>
</feature>
<feature type="binding site" evidence="3 4 5 8 9 10 11">
    <location>
        <position position="63"/>
    </location>
    <ligand>
        <name>Zn(2+)</name>
        <dbReference type="ChEBI" id="CHEBI:29105"/>
    </ligand>
</feature>
<feature type="binding site" evidence="1 7 11">
    <location>
        <position position="95"/>
    </location>
    <ligand>
        <name>substrate</name>
    </ligand>
</feature>
<feature type="binding site" evidence="3 4 5 8 9 10 11">
    <location>
        <position position="153"/>
    </location>
    <ligand>
        <name>Zn(2+)</name>
        <dbReference type="ChEBI" id="CHEBI:29105"/>
    </ligand>
</feature>
<feature type="binding site" evidence="1 7 11">
    <location>
        <position position="278"/>
    </location>
    <ligand>
        <name>substrate</name>
    </ligand>
</feature>
<feature type="binding site" evidence="4 5 10 11">
    <location>
        <position position="305"/>
    </location>
    <ligand>
        <name>Zn(2+)</name>
        <dbReference type="ChEBI" id="CHEBI:29105"/>
    </ligand>
</feature>
<feature type="binding site" evidence="1 7 11">
    <location>
        <position position="309"/>
    </location>
    <ligand>
        <name>substrate</name>
    </ligand>
</feature>
<feature type="binding site" evidence="1 7 11">
    <location>
        <begin position="322"/>
        <end position="323"/>
    </location>
    <ligand>
        <name>substrate</name>
    </ligand>
</feature>
<feature type="mutagenesis site" description="Does not affect activity." evidence="5">
    <original>H</original>
    <variation>A</variation>
    <location>
        <position position="180"/>
    </location>
</feature>
<feature type="mutagenesis site" description="Does not affect activity." evidence="5">
    <original>H</original>
    <variation>A</variation>
    <location>
        <position position="232"/>
    </location>
</feature>
<feature type="strand" evidence="12">
    <location>
        <begin position="3"/>
        <end position="8"/>
    </location>
</feature>
<feature type="strand" evidence="12">
    <location>
        <begin position="10"/>
        <end position="13"/>
    </location>
</feature>
<feature type="helix" evidence="12">
    <location>
        <begin position="14"/>
        <end position="16"/>
    </location>
</feature>
<feature type="strand" evidence="12">
    <location>
        <begin position="18"/>
        <end position="21"/>
    </location>
</feature>
<feature type="strand" evidence="12">
    <location>
        <begin position="23"/>
        <end position="27"/>
    </location>
</feature>
<feature type="strand" evidence="12">
    <location>
        <begin position="30"/>
        <end position="37"/>
    </location>
</feature>
<feature type="strand" evidence="12">
    <location>
        <begin position="41"/>
        <end position="47"/>
    </location>
</feature>
<feature type="strand" evidence="12">
    <location>
        <begin position="51"/>
        <end position="55"/>
    </location>
</feature>
<feature type="strand" evidence="12">
    <location>
        <begin position="57"/>
        <end position="62"/>
    </location>
</feature>
<feature type="turn" evidence="12">
    <location>
        <begin position="66"/>
        <end position="68"/>
    </location>
</feature>
<feature type="turn" evidence="12">
    <location>
        <begin position="70"/>
        <end position="72"/>
    </location>
</feature>
<feature type="helix" evidence="12">
    <location>
        <begin position="75"/>
        <end position="84"/>
    </location>
</feature>
<feature type="strand" evidence="12">
    <location>
        <begin position="87"/>
        <end position="92"/>
    </location>
</feature>
<feature type="strand" evidence="12">
    <location>
        <begin position="96"/>
        <end position="98"/>
    </location>
</feature>
<feature type="helix" evidence="12">
    <location>
        <begin position="103"/>
        <end position="116"/>
    </location>
</feature>
<feature type="strand" evidence="12">
    <location>
        <begin position="118"/>
        <end position="123"/>
    </location>
</feature>
<feature type="helix" evidence="12">
    <location>
        <begin position="129"/>
        <end position="131"/>
    </location>
</feature>
<feature type="strand" evidence="12">
    <location>
        <begin position="133"/>
        <end position="136"/>
    </location>
</feature>
<feature type="helix" evidence="12">
    <location>
        <begin position="139"/>
        <end position="145"/>
    </location>
</feature>
<feature type="helix" evidence="12">
    <location>
        <begin position="160"/>
        <end position="173"/>
    </location>
</feature>
<feature type="strand" evidence="12">
    <location>
        <begin position="176"/>
        <end position="179"/>
    </location>
</feature>
<feature type="helix" evidence="12">
    <location>
        <begin position="183"/>
        <end position="186"/>
    </location>
</feature>
<feature type="strand" evidence="13">
    <location>
        <begin position="189"/>
        <end position="194"/>
    </location>
</feature>
<feature type="helix" evidence="13">
    <location>
        <begin position="195"/>
        <end position="200"/>
    </location>
</feature>
<feature type="helix" evidence="12">
    <location>
        <begin position="210"/>
        <end position="224"/>
    </location>
</feature>
<feature type="strand" evidence="12">
    <location>
        <begin position="227"/>
        <end position="231"/>
    </location>
</feature>
<feature type="helix" evidence="12">
    <location>
        <begin position="236"/>
        <end position="247"/>
    </location>
</feature>
<feature type="strand" evidence="12">
    <location>
        <begin position="252"/>
        <end position="256"/>
    </location>
</feature>
<feature type="helix" evidence="12">
    <location>
        <begin position="258"/>
        <end position="261"/>
    </location>
</feature>
<feature type="helix" evidence="13">
    <location>
        <begin position="267"/>
        <end position="271"/>
    </location>
</feature>
<feature type="helix" evidence="13">
    <location>
        <begin position="272"/>
        <end position="275"/>
    </location>
</feature>
<feature type="helix" evidence="12">
    <location>
        <begin position="287"/>
        <end position="295"/>
    </location>
</feature>
<feature type="helix" evidence="13">
    <location>
        <begin position="311"/>
        <end position="313"/>
    </location>
</feature>
<feature type="strand" evidence="13">
    <location>
        <begin position="314"/>
        <end position="316"/>
    </location>
</feature>
<feature type="helix" evidence="13">
    <location>
        <begin position="317"/>
        <end position="319"/>
    </location>
</feature>
<feature type="helix" evidence="12">
    <location>
        <begin position="327"/>
        <end position="329"/>
    </location>
</feature>
<feature type="helix" evidence="12">
    <location>
        <begin position="330"/>
        <end position="339"/>
    </location>
</feature>
<feature type="helix" evidence="12">
    <location>
        <begin position="345"/>
        <end position="352"/>
    </location>
</feature>
<feature type="helix" evidence="12">
    <location>
        <begin position="354"/>
        <end position="360"/>
    </location>
</feature>
<feature type="strand" evidence="12">
    <location>
        <begin position="375"/>
        <end position="385"/>
    </location>
</feature>
<feature type="turn" evidence="12">
    <location>
        <begin position="388"/>
        <end position="390"/>
    </location>
</feature>
<feature type="turn" evidence="12">
    <location>
        <begin position="399"/>
        <end position="402"/>
    </location>
</feature>
<feature type="strand" evidence="12">
    <location>
        <begin position="404"/>
        <end position="414"/>
    </location>
</feature>
<feature type="strand" evidence="12">
    <location>
        <begin position="417"/>
        <end position="421"/>
    </location>
</feature>
<keyword id="KW-0002">3D-structure</keyword>
<keyword id="KW-0378">Hydrolase</keyword>
<keyword id="KW-0479">Metal-binding</keyword>
<keyword id="KW-0665">Pyrimidine biosynthesis</keyword>
<keyword id="KW-1185">Reference proteome</keyword>
<keyword id="KW-0862">Zinc</keyword>
<dbReference type="EC" id="3.5.2.3" evidence="1 2 5"/>
<dbReference type="EMBL" id="AE000657">
    <property type="protein sequence ID" value="AAC06948.1"/>
    <property type="molecule type" value="Genomic_DNA"/>
</dbReference>
<dbReference type="PIR" id="C70370">
    <property type="entry name" value="C70370"/>
</dbReference>
<dbReference type="RefSeq" id="NP_213551.1">
    <property type="nucleotide sequence ID" value="NC_000918.1"/>
</dbReference>
<dbReference type="RefSeq" id="WP_010880489.1">
    <property type="nucleotide sequence ID" value="NC_000918.1"/>
</dbReference>
<dbReference type="PDB" id="1XRF">
    <property type="method" value="X-ray"/>
    <property type="resolution" value="1.65 A"/>
    <property type="chains" value="A=1-422"/>
</dbReference>
<dbReference type="PDB" id="1XRT">
    <property type="method" value="X-ray"/>
    <property type="resolution" value="1.61 A"/>
    <property type="chains" value="A/B=1-422"/>
</dbReference>
<dbReference type="PDB" id="3D6N">
    <property type="method" value="X-ray"/>
    <property type="resolution" value="2.30 A"/>
    <property type="chains" value="A=1-422"/>
</dbReference>
<dbReference type="PDB" id="4BJH">
    <property type="method" value="X-ray"/>
    <property type="resolution" value="2.20 A"/>
    <property type="chains" value="A=1-422"/>
</dbReference>
<dbReference type="PDB" id="6GDD">
    <property type="method" value="X-ray"/>
    <property type="resolution" value="2.60 A"/>
    <property type="chains" value="A=1-422"/>
</dbReference>
<dbReference type="PDB" id="6GDE">
    <property type="method" value="X-ray"/>
    <property type="resolution" value="2.45 A"/>
    <property type="chains" value="A=1-422"/>
</dbReference>
<dbReference type="PDB" id="6GDF">
    <property type="method" value="X-ray"/>
    <property type="resolution" value="2.50 A"/>
    <property type="chains" value="A=1-422"/>
</dbReference>
<dbReference type="PDBsum" id="1XRF"/>
<dbReference type="PDBsum" id="1XRT"/>
<dbReference type="PDBsum" id="3D6N"/>
<dbReference type="PDBsum" id="4BJH"/>
<dbReference type="PDBsum" id="6GDD"/>
<dbReference type="PDBsum" id="6GDE"/>
<dbReference type="PDBsum" id="6GDF"/>
<dbReference type="SMR" id="O66990"/>
<dbReference type="FunCoup" id="O66990">
    <property type="interactions" value="395"/>
</dbReference>
<dbReference type="STRING" id="224324.aq_806"/>
<dbReference type="EnsemblBacteria" id="AAC06948">
    <property type="protein sequence ID" value="AAC06948"/>
    <property type="gene ID" value="aq_806"/>
</dbReference>
<dbReference type="KEGG" id="aae:aq_806"/>
<dbReference type="PATRIC" id="fig|224324.8.peg.636"/>
<dbReference type="eggNOG" id="COG0044">
    <property type="taxonomic scope" value="Bacteria"/>
</dbReference>
<dbReference type="HOGENOM" id="CLU_015572_1_0_0"/>
<dbReference type="InParanoid" id="O66990"/>
<dbReference type="OrthoDB" id="9765462at2"/>
<dbReference type="BRENDA" id="3.5.2.3">
    <property type="organism ID" value="396"/>
</dbReference>
<dbReference type="SABIO-RK" id="O66990"/>
<dbReference type="UniPathway" id="UPA00070">
    <property type="reaction ID" value="UER00117"/>
</dbReference>
<dbReference type="EvolutionaryTrace" id="O66990"/>
<dbReference type="Proteomes" id="UP000000798">
    <property type="component" value="Chromosome"/>
</dbReference>
<dbReference type="GO" id="GO:0005737">
    <property type="term" value="C:cytoplasm"/>
    <property type="evidence" value="ECO:0000318"/>
    <property type="project" value="GO_Central"/>
</dbReference>
<dbReference type="GO" id="GO:0004038">
    <property type="term" value="F:allantoinase activity"/>
    <property type="evidence" value="ECO:0000318"/>
    <property type="project" value="GO_Central"/>
</dbReference>
<dbReference type="GO" id="GO:0004151">
    <property type="term" value="F:dihydroorotase activity"/>
    <property type="evidence" value="ECO:0007669"/>
    <property type="project" value="UniProtKB-UniRule"/>
</dbReference>
<dbReference type="GO" id="GO:0008270">
    <property type="term" value="F:zinc ion binding"/>
    <property type="evidence" value="ECO:0007669"/>
    <property type="project" value="UniProtKB-UniRule"/>
</dbReference>
<dbReference type="GO" id="GO:0044205">
    <property type="term" value="P:'de novo' UMP biosynthetic process"/>
    <property type="evidence" value="ECO:0007669"/>
    <property type="project" value="UniProtKB-UniRule"/>
</dbReference>
<dbReference type="GO" id="GO:0006145">
    <property type="term" value="P:purine nucleobase catabolic process"/>
    <property type="evidence" value="ECO:0000318"/>
    <property type="project" value="GO_Central"/>
</dbReference>
<dbReference type="CDD" id="cd01317">
    <property type="entry name" value="DHOase_IIa"/>
    <property type="match status" value="1"/>
</dbReference>
<dbReference type="Gene3D" id="3.20.20.140">
    <property type="entry name" value="Metal-dependent hydrolases"/>
    <property type="match status" value="1"/>
</dbReference>
<dbReference type="Gene3D" id="2.30.40.10">
    <property type="entry name" value="Urease, subunit C, domain 1"/>
    <property type="match status" value="1"/>
</dbReference>
<dbReference type="HAMAP" id="MF_00220_B">
    <property type="entry name" value="PyrC_classI_B"/>
    <property type="match status" value="1"/>
</dbReference>
<dbReference type="InterPro" id="IPR006680">
    <property type="entry name" value="Amidohydro-rel"/>
</dbReference>
<dbReference type="InterPro" id="IPR004722">
    <property type="entry name" value="DHOase"/>
</dbReference>
<dbReference type="InterPro" id="IPR050138">
    <property type="entry name" value="DHOase/Allantoinase_Hydrolase"/>
</dbReference>
<dbReference type="InterPro" id="IPR002195">
    <property type="entry name" value="Dihydroorotase_CS"/>
</dbReference>
<dbReference type="InterPro" id="IPR011059">
    <property type="entry name" value="Metal-dep_hydrolase_composite"/>
</dbReference>
<dbReference type="InterPro" id="IPR032466">
    <property type="entry name" value="Metal_Hydrolase"/>
</dbReference>
<dbReference type="NCBIfam" id="NF006844">
    <property type="entry name" value="PRK09357.2-5"/>
    <property type="match status" value="1"/>
</dbReference>
<dbReference type="NCBIfam" id="TIGR00857">
    <property type="entry name" value="pyrC_multi"/>
    <property type="match status" value="1"/>
</dbReference>
<dbReference type="PANTHER" id="PTHR43668">
    <property type="entry name" value="ALLANTOINASE"/>
    <property type="match status" value="1"/>
</dbReference>
<dbReference type="PANTHER" id="PTHR43668:SF2">
    <property type="entry name" value="ALLANTOINASE"/>
    <property type="match status" value="1"/>
</dbReference>
<dbReference type="Pfam" id="PF01979">
    <property type="entry name" value="Amidohydro_1"/>
    <property type="match status" value="1"/>
</dbReference>
<dbReference type="SUPFAM" id="SSF51338">
    <property type="entry name" value="Composite domain of metallo-dependent hydrolases"/>
    <property type="match status" value="1"/>
</dbReference>
<dbReference type="SUPFAM" id="SSF51556">
    <property type="entry name" value="Metallo-dependent hydrolases"/>
    <property type="match status" value="1"/>
</dbReference>
<dbReference type="PROSITE" id="PS00482">
    <property type="entry name" value="DIHYDROOROTASE_1"/>
    <property type="match status" value="1"/>
</dbReference>
<dbReference type="PROSITE" id="PS00483">
    <property type="entry name" value="DIHYDROOROTASE_2"/>
    <property type="match status" value="1"/>
</dbReference>
<proteinExistence type="evidence at protein level"/>
<accession>O66990</accession>
<comment type="function">
    <text evidence="1 2 5">Catalyzes the reversible cyclization of carbamoyl aspartate to dihydroorotate.</text>
</comment>
<comment type="catalytic activity">
    <reaction evidence="1 2 5">
        <text>(S)-dihydroorotate + H2O = N-carbamoyl-L-aspartate + H(+)</text>
        <dbReference type="Rhea" id="RHEA:24296"/>
        <dbReference type="ChEBI" id="CHEBI:15377"/>
        <dbReference type="ChEBI" id="CHEBI:15378"/>
        <dbReference type="ChEBI" id="CHEBI:30864"/>
        <dbReference type="ChEBI" id="CHEBI:32814"/>
        <dbReference type="EC" id="3.5.2.3"/>
    </reaction>
</comment>
<comment type="cofactor">
    <cofactor evidence="1 2 3 4 5">
        <name>Zn(2+)</name>
        <dbReference type="ChEBI" id="CHEBI:29105"/>
    </cofactor>
    <text evidence="2 3 4 5">Binds 1 Zn(2+) ion per subunit (PubMed:15381710, PubMed:15826652, PubMed:19128030, PubMed:24314009). Fully functional with a mononuclear metal center. Does not require a second metal for activity, although the conservation of the second metal-binding site during evolution leaves open the possibility that a second ion might bind in vivo (PubMed:24314009).</text>
</comment>
<comment type="activity regulation">
    <text evidence="2">The monomer has very low activity by itself. Activated several thousandfold by formation of a complex with PyrB aspartate carbamoyltransferase (ATCase).</text>
</comment>
<comment type="pathway">
    <text evidence="1 6">Pyrimidine metabolism; UMP biosynthesis via de novo pathway; (S)-dihydroorotate from bicarbonate: step 3/3.</text>
</comment>
<comment type="subunit">
    <text evidence="2 4">Monomer. Forms a 1:1 stoichiometric complex with PyrB. The complex exists as an equilibrium mixture of heterohexamers, composed of 3 PyrC and 3 PyrB subunits, and dodecamers. The complex has both DHOase and ATCase activities.</text>
</comment>
<comment type="similarity">
    <text evidence="1 6">Belongs to the metallo-dependent hydrolases superfamily. DHOase family. Class I DHOase subfamily.</text>
</comment>
<organism>
    <name type="scientific">Aquifex aeolicus (strain VF5)</name>
    <dbReference type="NCBI Taxonomy" id="224324"/>
    <lineage>
        <taxon>Bacteria</taxon>
        <taxon>Pseudomonadati</taxon>
        <taxon>Aquificota</taxon>
        <taxon>Aquificia</taxon>
        <taxon>Aquificales</taxon>
        <taxon>Aquificaceae</taxon>
        <taxon>Aquifex</taxon>
    </lineage>
</organism>
<reference key="1">
    <citation type="journal article" date="1998" name="Nature">
        <title>The complete genome of the hyperthermophilic bacterium Aquifex aeolicus.</title>
        <authorList>
            <person name="Deckert G."/>
            <person name="Warren P.V."/>
            <person name="Gaasterland T."/>
            <person name="Young W.G."/>
            <person name="Lenox A.L."/>
            <person name="Graham D.E."/>
            <person name="Overbeek R."/>
            <person name="Snead M.A."/>
            <person name="Keller M."/>
            <person name="Aujay M."/>
            <person name="Huber R."/>
            <person name="Feldman R.A."/>
            <person name="Short J.M."/>
            <person name="Olsen G.J."/>
            <person name="Swanson R.V."/>
        </authorList>
    </citation>
    <scope>NUCLEOTIDE SEQUENCE [LARGE SCALE GENOMIC DNA]</scope>
    <source>
        <strain>VF5</strain>
    </source>
</reference>
<reference key="2">
    <citation type="journal article" date="2004" name="J. Biol. Chem.">
        <title>Aquifex aeolicus dihydroorotase: association with aspartate transcarbamoylase switches on catalytic activity.</title>
        <authorList>
            <person name="Ahuja A."/>
            <person name="Purcarea C."/>
            <person name="Ebert R."/>
            <person name="Sadecki S."/>
            <person name="Guy H.I."/>
            <person name="Evans D.R."/>
        </authorList>
    </citation>
    <scope>FUNCTION</scope>
    <scope>CATALYTIC ACTIVITY</scope>
    <scope>COFACTOR</scope>
    <scope>ACTIVITY REGULATION</scope>
    <scope>SUBUNIT</scope>
</reference>
<reference evidence="8 9" key="3">
    <citation type="journal article" date="2005" name="J. Mol. Biol.">
        <title>The crystal structure of a novel, latent dihydroorotase from Aquifex aeolicus at 1.7A resolution.</title>
        <authorList>
            <person name="Martin P.D."/>
            <person name="Purcarea C."/>
            <person name="Zhang P."/>
            <person name="Vaishnav A."/>
            <person name="Sadecki S."/>
            <person name="Guy-Evans H.I."/>
            <person name="Evans D.R."/>
            <person name="Edwards B.F."/>
        </authorList>
    </citation>
    <scope>X-RAY CRYSTALLOGRAPHY (1.61 ANGSTROMS) IN COMPLEX WITH ZINC</scope>
    <scope>COFACTOR</scope>
</reference>
<reference evidence="10" key="4">
    <citation type="journal article" date="2009" name="Biochemistry">
        <title>Dihydroorotase from the hyperthermophile Aquifex aeolicus is activated by stoichiometric association with aspartate transcarbamoylase and forms a one-pot reactor for pyrimidine biosynthesis.</title>
        <authorList>
            <person name="Zhang P."/>
            <person name="Martin P.D."/>
            <person name="Purcarea C."/>
            <person name="Vaishnav A."/>
            <person name="Brunzelle J.S."/>
            <person name="Fernando R."/>
            <person name="Guy-Evans H.I."/>
            <person name="Evans D.R."/>
            <person name="Edwards B.F."/>
        </authorList>
    </citation>
    <scope>X-RAY CRYSTALLOGRAPHY (2.30 ANGSTROMS) IN COMPLEX WITH PYRB AND ZINC</scope>
    <scope>COFACTOR</scope>
    <scope>SUBUNIT</scope>
</reference>
<reference evidence="11" key="5">
    <citation type="journal article" date="2013" name="BMC Biochem.">
        <title>The mononuclear metal center of type-I dihydroorotase from Aquifex aeolicus.</title>
        <authorList>
            <person name="Edwards B.F."/>
            <person name="Fernando R."/>
            <person name="Martin P.D."/>
            <person name="Grimley E."/>
            <person name="Cordes M."/>
            <person name="Vaishnav A."/>
            <person name="Brunzelle J.S."/>
            <person name="Evans H.G."/>
            <person name="Evans D.R."/>
        </authorList>
    </citation>
    <scope>X-RAY CRYSTALLOGRAPHY (2.20 ANGSTROMS) IN COMPLEX WITH PYRB; DIHYDROOROTIC ACID AND ZINC</scope>
    <scope>FUNCTION</scope>
    <scope>CATALYTIC ACTIVITY</scope>
    <scope>COFACTOR</scope>
    <scope>MUTAGENESIS OF HIS-180 AND HIS-232</scope>
</reference>
<name>PYRC_AQUAE</name>